<dbReference type="EC" id="4.1.1.37" evidence="1"/>
<dbReference type="EMBL" id="CP001048">
    <property type="protein sequence ID" value="ACC87306.1"/>
    <property type="molecule type" value="Genomic_DNA"/>
</dbReference>
<dbReference type="RefSeq" id="WP_002210686.1">
    <property type="nucleotide sequence ID" value="NZ_CP009780.1"/>
</dbReference>
<dbReference type="SMR" id="B2K124"/>
<dbReference type="GeneID" id="57974983"/>
<dbReference type="KEGG" id="ypb:YPTS_0315"/>
<dbReference type="PATRIC" id="fig|502801.10.peg.3991"/>
<dbReference type="UniPathway" id="UPA00251">
    <property type="reaction ID" value="UER00321"/>
</dbReference>
<dbReference type="GO" id="GO:0005829">
    <property type="term" value="C:cytosol"/>
    <property type="evidence" value="ECO:0007669"/>
    <property type="project" value="TreeGrafter"/>
</dbReference>
<dbReference type="GO" id="GO:0004853">
    <property type="term" value="F:uroporphyrinogen decarboxylase activity"/>
    <property type="evidence" value="ECO:0007669"/>
    <property type="project" value="UniProtKB-UniRule"/>
</dbReference>
<dbReference type="GO" id="GO:0019353">
    <property type="term" value="P:protoporphyrinogen IX biosynthetic process from glutamate"/>
    <property type="evidence" value="ECO:0007669"/>
    <property type="project" value="TreeGrafter"/>
</dbReference>
<dbReference type="CDD" id="cd00717">
    <property type="entry name" value="URO-D"/>
    <property type="match status" value="1"/>
</dbReference>
<dbReference type="FunFam" id="3.20.20.210:FF:000001">
    <property type="entry name" value="Uroporphyrinogen decarboxylase"/>
    <property type="match status" value="1"/>
</dbReference>
<dbReference type="Gene3D" id="3.20.20.210">
    <property type="match status" value="1"/>
</dbReference>
<dbReference type="HAMAP" id="MF_00218">
    <property type="entry name" value="URO_D"/>
    <property type="match status" value="1"/>
</dbReference>
<dbReference type="InterPro" id="IPR038071">
    <property type="entry name" value="UROD/MetE-like_sf"/>
</dbReference>
<dbReference type="InterPro" id="IPR006361">
    <property type="entry name" value="Uroporphyrinogen_deCO2ase_HemE"/>
</dbReference>
<dbReference type="InterPro" id="IPR000257">
    <property type="entry name" value="Uroporphyrinogen_deCOase"/>
</dbReference>
<dbReference type="NCBIfam" id="TIGR01464">
    <property type="entry name" value="hemE"/>
    <property type="match status" value="1"/>
</dbReference>
<dbReference type="PANTHER" id="PTHR21091">
    <property type="entry name" value="METHYLTETRAHYDROFOLATE:HOMOCYSTEINE METHYLTRANSFERASE RELATED"/>
    <property type="match status" value="1"/>
</dbReference>
<dbReference type="PANTHER" id="PTHR21091:SF169">
    <property type="entry name" value="UROPORPHYRINOGEN DECARBOXYLASE"/>
    <property type="match status" value="1"/>
</dbReference>
<dbReference type="Pfam" id="PF01208">
    <property type="entry name" value="URO-D"/>
    <property type="match status" value="1"/>
</dbReference>
<dbReference type="SUPFAM" id="SSF51726">
    <property type="entry name" value="UROD/MetE-like"/>
    <property type="match status" value="1"/>
</dbReference>
<dbReference type="PROSITE" id="PS00906">
    <property type="entry name" value="UROD_1"/>
    <property type="match status" value="1"/>
</dbReference>
<dbReference type="PROSITE" id="PS00907">
    <property type="entry name" value="UROD_2"/>
    <property type="match status" value="1"/>
</dbReference>
<feature type="chain" id="PRO_1000100029" description="Uroporphyrinogen decarboxylase">
    <location>
        <begin position="1"/>
        <end position="355"/>
    </location>
</feature>
<feature type="binding site" evidence="1">
    <location>
        <begin position="27"/>
        <end position="31"/>
    </location>
    <ligand>
        <name>substrate</name>
    </ligand>
</feature>
<feature type="binding site" evidence="1">
    <location>
        <position position="77"/>
    </location>
    <ligand>
        <name>substrate</name>
    </ligand>
</feature>
<feature type="binding site" evidence="1">
    <location>
        <position position="154"/>
    </location>
    <ligand>
        <name>substrate</name>
    </ligand>
</feature>
<feature type="binding site" evidence="1">
    <location>
        <position position="209"/>
    </location>
    <ligand>
        <name>substrate</name>
    </ligand>
</feature>
<feature type="binding site" evidence="1">
    <location>
        <position position="327"/>
    </location>
    <ligand>
        <name>substrate</name>
    </ligand>
</feature>
<feature type="site" description="Transition state stabilizer" evidence="1">
    <location>
        <position position="77"/>
    </location>
</feature>
<proteinExistence type="inferred from homology"/>
<name>DCUP_YERPB</name>
<organism>
    <name type="scientific">Yersinia pseudotuberculosis serotype IB (strain PB1/+)</name>
    <dbReference type="NCBI Taxonomy" id="502801"/>
    <lineage>
        <taxon>Bacteria</taxon>
        <taxon>Pseudomonadati</taxon>
        <taxon>Pseudomonadota</taxon>
        <taxon>Gammaproteobacteria</taxon>
        <taxon>Enterobacterales</taxon>
        <taxon>Yersiniaceae</taxon>
        <taxon>Yersinia</taxon>
    </lineage>
</organism>
<keyword id="KW-0963">Cytoplasm</keyword>
<keyword id="KW-0210">Decarboxylase</keyword>
<keyword id="KW-0456">Lyase</keyword>
<keyword id="KW-0627">Porphyrin biosynthesis</keyword>
<reference key="1">
    <citation type="submission" date="2008-04" db="EMBL/GenBank/DDBJ databases">
        <title>Complete sequence of Yersinia pseudotuberculosis PB1/+.</title>
        <authorList>
            <person name="Copeland A."/>
            <person name="Lucas S."/>
            <person name="Lapidus A."/>
            <person name="Glavina del Rio T."/>
            <person name="Dalin E."/>
            <person name="Tice H."/>
            <person name="Bruce D."/>
            <person name="Goodwin L."/>
            <person name="Pitluck S."/>
            <person name="Munk A.C."/>
            <person name="Brettin T."/>
            <person name="Detter J.C."/>
            <person name="Han C."/>
            <person name="Tapia R."/>
            <person name="Schmutz J."/>
            <person name="Larimer F."/>
            <person name="Land M."/>
            <person name="Hauser L."/>
            <person name="Challacombe J.F."/>
            <person name="Green L."/>
            <person name="Lindler L.E."/>
            <person name="Nikolich M.P."/>
            <person name="Richardson P."/>
        </authorList>
    </citation>
    <scope>NUCLEOTIDE SEQUENCE [LARGE SCALE GENOMIC DNA]</scope>
    <source>
        <strain>PB1/+</strain>
    </source>
</reference>
<accession>B2K124</accession>
<sequence>MNELKNDRYLRALLRQPVDMTPVWMMRQAGRYLPEYKATRAIAGDFMSLCKNAELACEVTMQPLRRYPLDAAILFSDILTIPDAMGLGLYFETGEGPRFQSPITCRADVEKLPIPDPEQELGYVMNAVRTIRRELAGSVPLIGFSGSPWTLATYMVEGGSSKAFTKLKKMMYAEPQTLHLLLDKLADSVILYLNAQIKAGAQSVMIFDTWGGVLTGRDYHEFSLNYMHKIVDGLIRENEGRRVPVTLFTKGGGPWLEAMAATGCDALGLDWTTDIADARRRVGDKVALQGNMDPSVLYAPPARIEQEVSTILASFGQGEGHVFNLGHGIHQDVPPAHAGAFVNAVHALSRPYHQK</sequence>
<comment type="function">
    <text evidence="1">Catalyzes the decarboxylation of four acetate groups of uroporphyrinogen-III to yield coproporphyrinogen-III.</text>
</comment>
<comment type="catalytic activity">
    <reaction evidence="1">
        <text>uroporphyrinogen III + 4 H(+) = coproporphyrinogen III + 4 CO2</text>
        <dbReference type="Rhea" id="RHEA:19865"/>
        <dbReference type="ChEBI" id="CHEBI:15378"/>
        <dbReference type="ChEBI" id="CHEBI:16526"/>
        <dbReference type="ChEBI" id="CHEBI:57308"/>
        <dbReference type="ChEBI" id="CHEBI:57309"/>
        <dbReference type="EC" id="4.1.1.37"/>
    </reaction>
</comment>
<comment type="pathway">
    <text evidence="1">Porphyrin-containing compound metabolism; protoporphyrin-IX biosynthesis; coproporphyrinogen-III from 5-aminolevulinate: step 4/4.</text>
</comment>
<comment type="subunit">
    <text evidence="1">Homodimer.</text>
</comment>
<comment type="subcellular location">
    <subcellularLocation>
        <location evidence="1">Cytoplasm</location>
    </subcellularLocation>
</comment>
<comment type="similarity">
    <text evidence="1">Belongs to the uroporphyrinogen decarboxylase family.</text>
</comment>
<protein>
    <recommendedName>
        <fullName evidence="1">Uroporphyrinogen decarboxylase</fullName>
        <shortName evidence="1">UPD</shortName>
        <shortName evidence="1">URO-D</shortName>
        <ecNumber evidence="1">4.1.1.37</ecNumber>
    </recommendedName>
</protein>
<gene>
    <name evidence="1" type="primary">hemE</name>
    <name type="ordered locus">YPTS_0315</name>
</gene>
<evidence type="ECO:0000255" key="1">
    <source>
        <dbReference type="HAMAP-Rule" id="MF_00218"/>
    </source>
</evidence>